<keyword id="KW-0687">Ribonucleoprotein</keyword>
<keyword id="KW-0689">Ribosomal protein</keyword>
<evidence type="ECO:0000255" key="1">
    <source>
        <dbReference type="HAMAP-Rule" id="MF_00539"/>
    </source>
</evidence>
<evidence type="ECO:0000256" key="2">
    <source>
        <dbReference type="SAM" id="MobiDB-lite"/>
    </source>
</evidence>
<evidence type="ECO:0000305" key="3"/>
<protein>
    <recommendedName>
        <fullName evidence="1">Large ribosomal subunit protein bL27</fullName>
    </recommendedName>
    <alternativeName>
        <fullName evidence="3">50S ribosomal protein L27</fullName>
    </alternativeName>
</protein>
<sequence length="84" mass="9239">MAHKKSGGASRNGRDSNPKYLGVKRFEGQIVDAGNILVRQRGTKIYPGINVGLGRDFTLYALKPGIVKFSIKHGKKYVNVLPIQ</sequence>
<feature type="chain" id="PRO_1000128739" description="Large ribosomal subunit protein bL27">
    <location>
        <begin position="1"/>
        <end position="84"/>
    </location>
</feature>
<feature type="region of interest" description="Disordered" evidence="2">
    <location>
        <begin position="1"/>
        <end position="20"/>
    </location>
</feature>
<name>RL27_DICT6</name>
<accession>B5YEQ2</accession>
<reference key="1">
    <citation type="journal article" date="2014" name="Genome Announc.">
        <title>Complete Genome Sequence of the Extreme Thermophile Dictyoglomus thermophilum H-6-12.</title>
        <authorList>
            <person name="Coil D.A."/>
            <person name="Badger J.H."/>
            <person name="Forberger H.C."/>
            <person name="Riggs F."/>
            <person name="Madupu R."/>
            <person name="Fedorova N."/>
            <person name="Ward N."/>
            <person name="Robb F.T."/>
            <person name="Eisen J.A."/>
        </authorList>
    </citation>
    <scope>NUCLEOTIDE SEQUENCE [LARGE SCALE GENOMIC DNA]</scope>
    <source>
        <strain>ATCC 35947 / DSM 3960 / H-6-12</strain>
    </source>
</reference>
<gene>
    <name evidence="1" type="primary">rpmA</name>
    <name type="ordered locus">DICTH_1176</name>
</gene>
<dbReference type="EMBL" id="CP001146">
    <property type="protein sequence ID" value="ACI19933.1"/>
    <property type="molecule type" value="Genomic_DNA"/>
</dbReference>
<dbReference type="RefSeq" id="WP_012548565.1">
    <property type="nucleotide sequence ID" value="NC_011297.1"/>
</dbReference>
<dbReference type="SMR" id="B5YEQ2"/>
<dbReference type="STRING" id="309799.DICTH_1176"/>
<dbReference type="PaxDb" id="309799-DICTH_1176"/>
<dbReference type="KEGG" id="dth:DICTH_1176"/>
<dbReference type="eggNOG" id="COG0211">
    <property type="taxonomic scope" value="Bacteria"/>
</dbReference>
<dbReference type="HOGENOM" id="CLU_095424_4_1_0"/>
<dbReference type="OrthoDB" id="9803474at2"/>
<dbReference type="Proteomes" id="UP000001733">
    <property type="component" value="Chromosome"/>
</dbReference>
<dbReference type="GO" id="GO:0022625">
    <property type="term" value="C:cytosolic large ribosomal subunit"/>
    <property type="evidence" value="ECO:0007669"/>
    <property type="project" value="TreeGrafter"/>
</dbReference>
<dbReference type="GO" id="GO:0003735">
    <property type="term" value="F:structural constituent of ribosome"/>
    <property type="evidence" value="ECO:0007669"/>
    <property type="project" value="InterPro"/>
</dbReference>
<dbReference type="GO" id="GO:0006412">
    <property type="term" value="P:translation"/>
    <property type="evidence" value="ECO:0007669"/>
    <property type="project" value="UniProtKB-UniRule"/>
</dbReference>
<dbReference type="FunFam" id="2.40.50.100:FF:000020">
    <property type="entry name" value="50S ribosomal protein L27"/>
    <property type="match status" value="1"/>
</dbReference>
<dbReference type="Gene3D" id="2.40.50.100">
    <property type="match status" value="1"/>
</dbReference>
<dbReference type="HAMAP" id="MF_00539">
    <property type="entry name" value="Ribosomal_bL27"/>
    <property type="match status" value="1"/>
</dbReference>
<dbReference type="InterPro" id="IPR001684">
    <property type="entry name" value="Ribosomal_bL27"/>
</dbReference>
<dbReference type="InterPro" id="IPR018261">
    <property type="entry name" value="Ribosomal_bL27_CS"/>
</dbReference>
<dbReference type="NCBIfam" id="TIGR00062">
    <property type="entry name" value="L27"/>
    <property type="match status" value="1"/>
</dbReference>
<dbReference type="PANTHER" id="PTHR15893:SF0">
    <property type="entry name" value="LARGE RIBOSOMAL SUBUNIT PROTEIN BL27M"/>
    <property type="match status" value="1"/>
</dbReference>
<dbReference type="PANTHER" id="PTHR15893">
    <property type="entry name" value="RIBOSOMAL PROTEIN L27"/>
    <property type="match status" value="1"/>
</dbReference>
<dbReference type="Pfam" id="PF01016">
    <property type="entry name" value="Ribosomal_L27"/>
    <property type="match status" value="1"/>
</dbReference>
<dbReference type="PRINTS" id="PR00063">
    <property type="entry name" value="RIBOSOMALL27"/>
</dbReference>
<dbReference type="SUPFAM" id="SSF110324">
    <property type="entry name" value="Ribosomal L27 protein-like"/>
    <property type="match status" value="1"/>
</dbReference>
<dbReference type="PROSITE" id="PS00831">
    <property type="entry name" value="RIBOSOMAL_L27"/>
    <property type="match status" value="1"/>
</dbReference>
<comment type="similarity">
    <text evidence="1">Belongs to the bacterial ribosomal protein bL27 family.</text>
</comment>
<organism>
    <name type="scientific">Dictyoglomus thermophilum (strain ATCC 35947 / DSM 3960 / H-6-12)</name>
    <dbReference type="NCBI Taxonomy" id="309799"/>
    <lineage>
        <taxon>Bacteria</taxon>
        <taxon>Pseudomonadati</taxon>
        <taxon>Dictyoglomota</taxon>
        <taxon>Dictyoglomia</taxon>
        <taxon>Dictyoglomales</taxon>
        <taxon>Dictyoglomaceae</taxon>
        <taxon>Dictyoglomus</taxon>
    </lineage>
</organism>
<proteinExistence type="inferred from homology"/>